<dbReference type="EC" id="3.5.1.5" evidence="1"/>
<dbReference type="EMBL" id="CP000572">
    <property type="protein sequence ID" value="ABN91008.1"/>
    <property type="molecule type" value="Genomic_DNA"/>
</dbReference>
<dbReference type="RefSeq" id="WP_004186466.1">
    <property type="nucleotide sequence ID" value="NC_009076.1"/>
</dbReference>
<dbReference type="SMR" id="A3NYC8"/>
<dbReference type="KEGG" id="bpl:BURPS1106A_3111"/>
<dbReference type="HOGENOM" id="CLU_129707_1_1_4"/>
<dbReference type="UniPathway" id="UPA00258">
    <property type="reaction ID" value="UER00370"/>
</dbReference>
<dbReference type="Proteomes" id="UP000006738">
    <property type="component" value="Chromosome I"/>
</dbReference>
<dbReference type="GO" id="GO:0035550">
    <property type="term" value="C:urease complex"/>
    <property type="evidence" value="ECO:0007669"/>
    <property type="project" value="InterPro"/>
</dbReference>
<dbReference type="GO" id="GO:0009039">
    <property type="term" value="F:urease activity"/>
    <property type="evidence" value="ECO:0007669"/>
    <property type="project" value="UniProtKB-UniRule"/>
</dbReference>
<dbReference type="GO" id="GO:0043419">
    <property type="term" value="P:urea catabolic process"/>
    <property type="evidence" value="ECO:0007669"/>
    <property type="project" value="UniProtKB-UniRule"/>
</dbReference>
<dbReference type="CDD" id="cd00407">
    <property type="entry name" value="Urease_beta"/>
    <property type="match status" value="1"/>
</dbReference>
<dbReference type="FunFam" id="2.10.150.10:FF:000001">
    <property type="entry name" value="Urease subunit beta"/>
    <property type="match status" value="1"/>
</dbReference>
<dbReference type="Gene3D" id="2.10.150.10">
    <property type="entry name" value="Urease, beta subunit"/>
    <property type="match status" value="1"/>
</dbReference>
<dbReference type="HAMAP" id="MF_01954">
    <property type="entry name" value="Urease_beta"/>
    <property type="match status" value="1"/>
</dbReference>
<dbReference type="InterPro" id="IPR002019">
    <property type="entry name" value="Urease_beta-like"/>
</dbReference>
<dbReference type="InterPro" id="IPR036461">
    <property type="entry name" value="Urease_betasu_sf"/>
</dbReference>
<dbReference type="InterPro" id="IPR050069">
    <property type="entry name" value="Urease_subunit"/>
</dbReference>
<dbReference type="NCBIfam" id="NF009682">
    <property type="entry name" value="PRK13203.1"/>
    <property type="match status" value="1"/>
</dbReference>
<dbReference type="NCBIfam" id="TIGR00192">
    <property type="entry name" value="urease_beta"/>
    <property type="match status" value="1"/>
</dbReference>
<dbReference type="PANTHER" id="PTHR33569">
    <property type="entry name" value="UREASE"/>
    <property type="match status" value="1"/>
</dbReference>
<dbReference type="PANTHER" id="PTHR33569:SF1">
    <property type="entry name" value="UREASE"/>
    <property type="match status" value="1"/>
</dbReference>
<dbReference type="Pfam" id="PF00699">
    <property type="entry name" value="Urease_beta"/>
    <property type="match status" value="1"/>
</dbReference>
<dbReference type="SUPFAM" id="SSF51278">
    <property type="entry name" value="Urease, beta-subunit"/>
    <property type="match status" value="1"/>
</dbReference>
<organism>
    <name type="scientific">Burkholderia pseudomallei (strain 1106a)</name>
    <dbReference type="NCBI Taxonomy" id="357348"/>
    <lineage>
        <taxon>Bacteria</taxon>
        <taxon>Pseudomonadati</taxon>
        <taxon>Pseudomonadota</taxon>
        <taxon>Betaproteobacteria</taxon>
        <taxon>Burkholderiales</taxon>
        <taxon>Burkholderiaceae</taxon>
        <taxon>Burkholderia</taxon>
        <taxon>pseudomallei group</taxon>
    </lineage>
</organism>
<sequence length="101" mass="10809">MIPGELVIDDGEHTLNAGRHTIALVVANTGDRPVQVGSHYHFHEVNDALSFDRAAARGFRLNIAAGTAVRFEPGQTRTVELVELGGARAVYGFQGKVMGPL</sequence>
<reference key="1">
    <citation type="journal article" date="2010" name="Genome Biol. Evol.">
        <title>Continuing evolution of Burkholderia mallei through genome reduction and large-scale rearrangements.</title>
        <authorList>
            <person name="Losada L."/>
            <person name="Ronning C.M."/>
            <person name="DeShazer D."/>
            <person name="Woods D."/>
            <person name="Fedorova N."/>
            <person name="Kim H.S."/>
            <person name="Shabalina S.A."/>
            <person name="Pearson T.R."/>
            <person name="Brinkac L."/>
            <person name="Tan P."/>
            <person name="Nandi T."/>
            <person name="Crabtree J."/>
            <person name="Badger J."/>
            <person name="Beckstrom-Sternberg S."/>
            <person name="Saqib M."/>
            <person name="Schutzer S.E."/>
            <person name="Keim P."/>
            <person name="Nierman W.C."/>
        </authorList>
    </citation>
    <scope>NUCLEOTIDE SEQUENCE [LARGE SCALE GENOMIC DNA]</scope>
    <source>
        <strain>1106a</strain>
    </source>
</reference>
<evidence type="ECO:0000255" key="1">
    <source>
        <dbReference type="HAMAP-Rule" id="MF_01954"/>
    </source>
</evidence>
<accession>A3NYC8</accession>
<name>URE2_BURP0</name>
<feature type="chain" id="PRO_1000070725" description="Urease subunit beta">
    <location>
        <begin position="1"/>
        <end position="101"/>
    </location>
</feature>
<protein>
    <recommendedName>
        <fullName evidence="1">Urease subunit beta</fullName>
        <ecNumber evidence="1">3.5.1.5</ecNumber>
    </recommendedName>
    <alternativeName>
        <fullName evidence="1">Urea amidohydrolase subunit beta</fullName>
    </alternativeName>
</protein>
<gene>
    <name evidence="1" type="primary">ureB</name>
    <name type="ordered locus">BURPS1106A_3111</name>
</gene>
<comment type="catalytic activity">
    <reaction evidence="1">
        <text>urea + 2 H2O + H(+) = hydrogencarbonate + 2 NH4(+)</text>
        <dbReference type="Rhea" id="RHEA:20557"/>
        <dbReference type="ChEBI" id="CHEBI:15377"/>
        <dbReference type="ChEBI" id="CHEBI:15378"/>
        <dbReference type="ChEBI" id="CHEBI:16199"/>
        <dbReference type="ChEBI" id="CHEBI:17544"/>
        <dbReference type="ChEBI" id="CHEBI:28938"/>
        <dbReference type="EC" id="3.5.1.5"/>
    </reaction>
</comment>
<comment type="pathway">
    <text evidence="1">Nitrogen metabolism; urea degradation; CO(2) and NH(3) from urea (urease route): step 1/1.</text>
</comment>
<comment type="subunit">
    <text evidence="1">Heterotrimer of UreA (gamma), UreB (beta) and UreC (alpha) subunits. Three heterotrimers associate to form the active enzyme.</text>
</comment>
<comment type="subcellular location">
    <subcellularLocation>
        <location evidence="1">Cytoplasm</location>
    </subcellularLocation>
</comment>
<comment type="similarity">
    <text evidence="1">Belongs to the urease beta subunit family.</text>
</comment>
<keyword id="KW-0963">Cytoplasm</keyword>
<keyword id="KW-0378">Hydrolase</keyword>
<proteinExistence type="inferred from homology"/>